<reference key="1">
    <citation type="journal article" date="2007" name="PLoS ONE">
        <title>Analysis of the neurotoxin complex genes in Clostridium botulinum A1-A4 and B1 strains: BoNT/A3, /Ba4 and /B1 clusters are located within plasmids.</title>
        <authorList>
            <person name="Smith T.J."/>
            <person name="Hill K.K."/>
            <person name="Foley B.T."/>
            <person name="Detter J.C."/>
            <person name="Munk A.C."/>
            <person name="Bruce D.C."/>
            <person name="Doggett N.A."/>
            <person name="Smith L.A."/>
            <person name="Marks J.D."/>
            <person name="Xie G."/>
            <person name="Brettin T.S."/>
        </authorList>
    </citation>
    <scope>NUCLEOTIDE SEQUENCE [LARGE SCALE GENOMIC DNA]</scope>
    <source>
        <strain>Loch Maree / Type A3</strain>
    </source>
</reference>
<proteinExistence type="inferred from homology"/>
<comment type="function">
    <text evidence="1">An essential GTPase that binds both GDP and GTP, with rapid nucleotide exchange. Plays a role in 16S rRNA processing and 30S ribosomal subunit biogenesis and possibly also in cell cycle regulation and energy metabolism.</text>
</comment>
<comment type="subunit">
    <text evidence="1">Monomer.</text>
</comment>
<comment type="subcellular location">
    <subcellularLocation>
        <location>Cytoplasm</location>
    </subcellularLocation>
    <subcellularLocation>
        <location evidence="1">Cell membrane</location>
        <topology evidence="1">Peripheral membrane protein</topology>
    </subcellularLocation>
</comment>
<comment type="similarity">
    <text evidence="1 2">Belongs to the TRAFAC class TrmE-Era-EngA-EngB-Septin-like GTPase superfamily. Era GTPase family.</text>
</comment>
<evidence type="ECO:0000255" key="1">
    <source>
        <dbReference type="HAMAP-Rule" id="MF_00367"/>
    </source>
</evidence>
<evidence type="ECO:0000255" key="2">
    <source>
        <dbReference type="PROSITE-ProRule" id="PRU01050"/>
    </source>
</evidence>
<gene>
    <name evidence="1" type="primary">era</name>
    <name type="ordered locus">CLK_2330</name>
</gene>
<name>ERA_CLOBM</name>
<keyword id="KW-1003">Cell membrane</keyword>
<keyword id="KW-0963">Cytoplasm</keyword>
<keyword id="KW-0342">GTP-binding</keyword>
<keyword id="KW-0472">Membrane</keyword>
<keyword id="KW-0547">Nucleotide-binding</keyword>
<keyword id="KW-0690">Ribosome biogenesis</keyword>
<keyword id="KW-0694">RNA-binding</keyword>
<keyword id="KW-0699">rRNA-binding</keyword>
<accession>B1KZM3</accession>
<organism>
    <name type="scientific">Clostridium botulinum (strain Loch Maree / Type A3)</name>
    <dbReference type="NCBI Taxonomy" id="498214"/>
    <lineage>
        <taxon>Bacteria</taxon>
        <taxon>Bacillati</taxon>
        <taxon>Bacillota</taxon>
        <taxon>Clostridia</taxon>
        <taxon>Eubacteriales</taxon>
        <taxon>Clostridiaceae</taxon>
        <taxon>Clostridium</taxon>
    </lineage>
</organism>
<protein>
    <recommendedName>
        <fullName evidence="1">GTPase Era</fullName>
    </recommendedName>
</protein>
<sequence>MFKSGFVTIVGRPNVGKSTLLNAIMKEKLSIVSCRPQTTRNNIQTILTEDNYQLVFVDTPGIHKPKHKLGEYMVKSASDAMKDVDLVLFLINPDEKPGRGDLFIIEQLKEVKVPVFLVLNKIDENPQEKVAETLKTYSELMEFEEIIPISALKGKNIDLLKELMFKYIPEGPQYYPEDMIIDQNERFIVAEIVREKALRLLSEEVPHGIAVEILQMKRNEKGTYHIEGNILCEKNSHKPIIIGKGGSKLKKISQYARQDIEAFLQSKVYIRLWVKVKEEWRDNQSLLKELGYKNMK</sequence>
<feature type="chain" id="PRO_1000121313" description="GTPase Era">
    <location>
        <begin position="1"/>
        <end position="296"/>
    </location>
</feature>
<feature type="domain" description="Era-type G" evidence="2">
    <location>
        <begin position="3"/>
        <end position="170"/>
    </location>
</feature>
<feature type="domain" description="KH type-2" evidence="1">
    <location>
        <begin position="201"/>
        <end position="278"/>
    </location>
</feature>
<feature type="region of interest" description="G1" evidence="2">
    <location>
        <begin position="11"/>
        <end position="18"/>
    </location>
</feature>
<feature type="region of interest" description="G2" evidence="2">
    <location>
        <begin position="37"/>
        <end position="41"/>
    </location>
</feature>
<feature type="region of interest" description="G3" evidence="2">
    <location>
        <begin position="58"/>
        <end position="61"/>
    </location>
</feature>
<feature type="region of interest" description="G4" evidence="2">
    <location>
        <begin position="120"/>
        <end position="123"/>
    </location>
</feature>
<feature type="region of interest" description="G5" evidence="2">
    <location>
        <begin position="149"/>
        <end position="151"/>
    </location>
</feature>
<feature type="binding site" evidence="1">
    <location>
        <begin position="11"/>
        <end position="18"/>
    </location>
    <ligand>
        <name>GTP</name>
        <dbReference type="ChEBI" id="CHEBI:37565"/>
    </ligand>
</feature>
<feature type="binding site" evidence="1">
    <location>
        <begin position="58"/>
        <end position="62"/>
    </location>
    <ligand>
        <name>GTP</name>
        <dbReference type="ChEBI" id="CHEBI:37565"/>
    </ligand>
</feature>
<feature type="binding site" evidence="1">
    <location>
        <begin position="120"/>
        <end position="123"/>
    </location>
    <ligand>
        <name>GTP</name>
        <dbReference type="ChEBI" id="CHEBI:37565"/>
    </ligand>
</feature>
<dbReference type="EMBL" id="CP000962">
    <property type="protein sequence ID" value="ACA56939.1"/>
    <property type="molecule type" value="Genomic_DNA"/>
</dbReference>
<dbReference type="RefSeq" id="WP_012344741.1">
    <property type="nucleotide sequence ID" value="NC_010520.1"/>
</dbReference>
<dbReference type="SMR" id="B1KZM3"/>
<dbReference type="KEGG" id="cbl:CLK_2330"/>
<dbReference type="HOGENOM" id="CLU_038009_1_0_9"/>
<dbReference type="GO" id="GO:0005829">
    <property type="term" value="C:cytosol"/>
    <property type="evidence" value="ECO:0007669"/>
    <property type="project" value="TreeGrafter"/>
</dbReference>
<dbReference type="GO" id="GO:0005886">
    <property type="term" value="C:plasma membrane"/>
    <property type="evidence" value="ECO:0007669"/>
    <property type="project" value="UniProtKB-SubCell"/>
</dbReference>
<dbReference type="GO" id="GO:0005525">
    <property type="term" value="F:GTP binding"/>
    <property type="evidence" value="ECO:0007669"/>
    <property type="project" value="UniProtKB-UniRule"/>
</dbReference>
<dbReference type="GO" id="GO:0003924">
    <property type="term" value="F:GTPase activity"/>
    <property type="evidence" value="ECO:0007669"/>
    <property type="project" value="UniProtKB-UniRule"/>
</dbReference>
<dbReference type="GO" id="GO:0043024">
    <property type="term" value="F:ribosomal small subunit binding"/>
    <property type="evidence" value="ECO:0007669"/>
    <property type="project" value="TreeGrafter"/>
</dbReference>
<dbReference type="GO" id="GO:0070181">
    <property type="term" value="F:small ribosomal subunit rRNA binding"/>
    <property type="evidence" value="ECO:0007669"/>
    <property type="project" value="UniProtKB-UniRule"/>
</dbReference>
<dbReference type="GO" id="GO:0000028">
    <property type="term" value="P:ribosomal small subunit assembly"/>
    <property type="evidence" value="ECO:0007669"/>
    <property type="project" value="TreeGrafter"/>
</dbReference>
<dbReference type="CDD" id="cd04163">
    <property type="entry name" value="Era"/>
    <property type="match status" value="1"/>
</dbReference>
<dbReference type="CDD" id="cd22534">
    <property type="entry name" value="KH-II_Era"/>
    <property type="match status" value="1"/>
</dbReference>
<dbReference type="FunFam" id="3.30.300.20:FF:000003">
    <property type="entry name" value="GTPase Era"/>
    <property type="match status" value="1"/>
</dbReference>
<dbReference type="FunFam" id="3.40.50.300:FF:000094">
    <property type="entry name" value="GTPase Era"/>
    <property type="match status" value="1"/>
</dbReference>
<dbReference type="Gene3D" id="3.30.300.20">
    <property type="match status" value="1"/>
</dbReference>
<dbReference type="Gene3D" id="3.40.50.300">
    <property type="entry name" value="P-loop containing nucleotide triphosphate hydrolases"/>
    <property type="match status" value="1"/>
</dbReference>
<dbReference type="HAMAP" id="MF_00367">
    <property type="entry name" value="GTPase_Era"/>
    <property type="match status" value="1"/>
</dbReference>
<dbReference type="InterPro" id="IPR030388">
    <property type="entry name" value="G_ERA_dom"/>
</dbReference>
<dbReference type="InterPro" id="IPR006073">
    <property type="entry name" value="GTP-bd"/>
</dbReference>
<dbReference type="InterPro" id="IPR005662">
    <property type="entry name" value="GTPase_Era-like"/>
</dbReference>
<dbReference type="InterPro" id="IPR015946">
    <property type="entry name" value="KH_dom-like_a/b"/>
</dbReference>
<dbReference type="InterPro" id="IPR004044">
    <property type="entry name" value="KH_dom_type_2"/>
</dbReference>
<dbReference type="InterPro" id="IPR009019">
    <property type="entry name" value="KH_sf_prok-type"/>
</dbReference>
<dbReference type="InterPro" id="IPR027417">
    <property type="entry name" value="P-loop_NTPase"/>
</dbReference>
<dbReference type="InterPro" id="IPR005225">
    <property type="entry name" value="Small_GTP-bd"/>
</dbReference>
<dbReference type="NCBIfam" id="TIGR00436">
    <property type="entry name" value="era"/>
    <property type="match status" value="1"/>
</dbReference>
<dbReference type="NCBIfam" id="NF000908">
    <property type="entry name" value="PRK00089.1"/>
    <property type="match status" value="1"/>
</dbReference>
<dbReference type="NCBIfam" id="TIGR00231">
    <property type="entry name" value="small_GTP"/>
    <property type="match status" value="1"/>
</dbReference>
<dbReference type="PANTHER" id="PTHR42698">
    <property type="entry name" value="GTPASE ERA"/>
    <property type="match status" value="1"/>
</dbReference>
<dbReference type="PANTHER" id="PTHR42698:SF1">
    <property type="entry name" value="GTPASE ERA, MITOCHONDRIAL"/>
    <property type="match status" value="1"/>
</dbReference>
<dbReference type="Pfam" id="PF07650">
    <property type="entry name" value="KH_2"/>
    <property type="match status" value="1"/>
</dbReference>
<dbReference type="Pfam" id="PF01926">
    <property type="entry name" value="MMR_HSR1"/>
    <property type="match status" value="1"/>
</dbReference>
<dbReference type="SUPFAM" id="SSF52540">
    <property type="entry name" value="P-loop containing nucleoside triphosphate hydrolases"/>
    <property type="match status" value="1"/>
</dbReference>
<dbReference type="SUPFAM" id="SSF54814">
    <property type="entry name" value="Prokaryotic type KH domain (KH-domain type II)"/>
    <property type="match status" value="1"/>
</dbReference>
<dbReference type="PROSITE" id="PS51713">
    <property type="entry name" value="G_ERA"/>
    <property type="match status" value="1"/>
</dbReference>
<dbReference type="PROSITE" id="PS50823">
    <property type="entry name" value="KH_TYPE_2"/>
    <property type="match status" value="1"/>
</dbReference>